<comment type="function">
    <text evidence="1">Involved in spore wall assembly.</text>
</comment>
<comment type="subcellular location">
    <subcellularLocation>
        <location evidence="1">Membrane</location>
        <topology evidence="1">Multi-pass membrane protein</topology>
    </subcellularLocation>
</comment>
<comment type="similarity">
    <text evidence="4">Belongs to the OSW5 family.</text>
</comment>
<feature type="chain" id="PRO_0000405530" description="Outer spore wall protein 5">
    <location>
        <begin position="1"/>
        <end position="135"/>
    </location>
</feature>
<feature type="topological domain" description="Cytoplasmic" evidence="2">
    <location>
        <position position="1"/>
    </location>
</feature>
<feature type="transmembrane region" description="Helical" evidence="2">
    <location>
        <begin position="2"/>
        <end position="22"/>
    </location>
</feature>
<feature type="topological domain" description="Extracellular" evidence="2">
    <location>
        <begin position="23"/>
        <end position="24"/>
    </location>
</feature>
<feature type="transmembrane region" description="Helical" evidence="2">
    <location>
        <begin position="25"/>
        <end position="45"/>
    </location>
</feature>
<feature type="topological domain" description="Cytoplasmic" evidence="2">
    <location>
        <begin position="46"/>
        <end position="135"/>
    </location>
</feature>
<feature type="region of interest" description="Disordered" evidence="3">
    <location>
        <begin position="70"/>
        <end position="122"/>
    </location>
</feature>
<feature type="compositionally biased region" description="Polar residues" evidence="3">
    <location>
        <begin position="70"/>
        <end position="87"/>
    </location>
</feature>
<keyword id="KW-0472">Membrane</keyword>
<keyword id="KW-1185">Reference proteome</keyword>
<keyword id="KW-0749">Sporulation</keyword>
<keyword id="KW-0812">Transmembrane</keyword>
<keyword id="KW-1133">Transmembrane helix</keyword>
<proteinExistence type="inferred from homology"/>
<name>OSW5_ZYGRC</name>
<organism>
    <name type="scientific">Zygosaccharomyces rouxii (strain ATCC 2623 / CBS 732 / NBRC 1130 / NCYC 568 / NRRL Y-229)</name>
    <dbReference type="NCBI Taxonomy" id="559307"/>
    <lineage>
        <taxon>Eukaryota</taxon>
        <taxon>Fungi</taxon>
        <taxon>Dikarya</taxon>
        <taxon>Ascomycota</taxon>
        <taxon>Saccharomycotina</taxon>
        <taxon>Saccharomycetes</taxon>
        <taxon>Saccharomycetales</taxon>
        <taxon>Saccharomycetaceae</taxon>
        <taxon>Zygosaccharomyces</taxon>
    </lineage>
</organism>
<gene>
    <name type="primary">OSW5</name>
    <name type="ordered locus">ZYRO0A08096g</name>
</gene>
<protein>
    <recommendedName>
        <fullName>Outer spore wall protein 5</fullName>
    </recommendedName>
</protein>
<sequence>MATLSSVYFLIYFVSFLAIAAVASFFIIPLLGISFLFASAVVVFGFLSDITFKFAQSLYIKTDHRLKSTLSKMGNQKKGTNNSQAGNSPPPTPQPSVEPQLGPNANVWDAPGAETSTTSAIARSLEAREDVRVTN</sequence>
<accession>C5DQ25</accession>
<evidence type="ECO:0000250" key="1"/>
<evidence type="ECO:0000255" key="2"/>
<evidence type="ECO:0000256" key="3">
    <source>
        <dbReference type="SAM" id="MobiDB-lite"/>
    </source>
</evidence>
<evidence type="ECO:0000305" key="4"/>
<dbReference type="EMBL" id="CU928173">
    <property type="protein sequence ID" value="CAR25786.1"/>
    <property type="molecule type" value="Genomic_DNA"/>
</dbReference>
<dbReference type="RefSeq" id="XP_002494719.1">
    <property type="nucleotide sequence ID" value="XM_002494674.1"/>
</dbReference>
<dbReference type="SMR" id="C5DQ25"/>
<dbReference type="FunCoup" id="C5DQ25">
    <property type="interactions" value="14"/>
</dbReference>
<dbReference type="STRING" id="559307.C5DQ25"/>
<dbReference type="GeneID" id="8201532"/>
<dbReference type="KEGG" id="zro:ZYRO0A08096g"/>
<dbReference type="HOGENOM" id="CLU_147574_0_0_1"/>
<dbReference type="InParanoid" id="C5DQ25"/>
<dbReference type="Proteomes" id="UP000008536">
    <property type="component" value="Chromosome A"/>
</dbReference>
<dbReference type="GO" id="GO:0016020">
    <property type="term" value="C:membrane"/>
    <property type="evidence" value="ECO:0007669"/>
    <property type="project" value="UniProtKB-SubCell"/>
</dbReference>
<dbReference type="GO" id="GO:0030435">
    <property type="term" value="P:sporulation resulting in formation of a cellular spore"/>
    <property type="evidence" value="ECO:0007669"/>
    <property type="project" value="UniProtKB-KW"/>
</dbReference>
<dbReference type="InterPro" id="IPR031430">
    <property type="entry name" value="Osw5"/>
</dbReference>
<dbReference type="Pfam" id="PF17062">
    <property type="entry name" value="Osw5"/>
    <property type="match status" value="1"/>
</dbReference>
<reference key="1">
    <citation type="journal article" date="2009" name="Genome Res.">
        <title>Comparative genomics of protoploid Saccharomycetaceae.</title>
        <authorList>
            <consortium name="The Genolevures Consortium"/>
            <person name="Souciet J.-L."/>
            <person name="Dujon B."/>
            <person name="Gaillardin C."/>
            <person name="Johnston M."/>
            <person name="Baret P.V."/>
            <person name="Cliften P."/>
            <person name="Sherman D.J."/>
            <person name="Weissenbach J."/>
            <person name="Westhof E."/>
            <person name="Wincker P."/>
            <person name="Jubin C."/>
            <person name="Poulain J."/>
            <person name="Barbe V."/>
            <person name="Segurens B."/>
            <person name="Artiguenave F."/>
            <person name="Anthouard V."/>
            <person name="Vacherie B."/>
            <person name="Val M.-E."/>
            <person name="Fulton R.S."/>
            <person name="Minx P."/>
            <person name="Wilson R."/>
            <person name="Durrens P."/>
            <person name="Jean G."/>
            <person name="Marck C."/>
            <person name="Martin T."/>
            <person name="Nikolski M."/>
            <person name="Rolland T."/>
            <person name="Seret M.-L."/>
            <person name="Casaregola S."/>
            <person name="Despons L."/>
            <person name="Fairhead C."/>
            <person name="Fischer G."/>
            <person name="Lafontaine I."/>
            <person name="Leh V."/>
            <person name="Lemaire M."/>
            <person name="de Montigny J."/>
            <person name="Neuveglise C."/>
            <person name="Thierry A."/>
            <person name="Blanc-Lenfle I."/>
            <person name="Bleykasten C."/>
            <person name="Diffels J."/>
            <person name="Fritsch E."/>
            <person name="Frangeul L."/>
            <person name="Goeffon A."/>
            <person name="Jauniaux N."/>
            <person name="Kachouri-Lafond R."/>
            <person name="Payen C."/>
            <person name="Potier S."/>
            <person name="Pribylova L."/>
            <person name="Ozanne C."/>
            <person name="Richard G.-F."/>
            <person name="Sacerdot C."/>
            <person name="Straub M.-L."/>
            <person name="Talla E."/>
        </authorList>
    </citation>
    <scope>NUCLEOTIDE SEQUENCE [LARGE SCALE GENOMIC DNA]</scope>
    <source>
        <strain>ATCC 2623 / CBS 732 / BCRC 21506 / NBRC 1130 / NCYC 568 / NRRL Y-229</strain>
    </source>
</reference>